<dbReference type="EMBL" id="AF012825">
    <property type="protein sequence ID" value="AAM92444.1"/>
    <property type="molecule type" value="Genomic_DNA"/>
</dbReference>
<dbReference type="EMBL" id="AJ574801">
    <property type="protein sequence ID" value="CAE00473.1"/>
    <property type="molecule type" value="Genomic_DNA"/>
</dbReference>
<dbReference type="EMBL" id="AJ574802">
    <property type="protein sequence ID" value="CAE00474.1"/>
    <property type="molecule type" value="Genomic_DNA"/>
</dbReference>
<dbReference type="EMBL" id="AJ574803">
    <property type="protein sequence ID" value="CAE00475.1"/>
    <property type="molecule type" value="Genomic_DNA"/>
</dbReference>
<dbReference type="EMBL" id="AJ574804">
    <property type="protein sequence ID" value="CAE00476.1"/>
    <property type="molecule type" value="Genomic_DNA"/>
</dbReference>
<dbReference type="EMBL" id="AJ574805">
    <property type="protein sequence ID" value="CAE00477.1"/>
    <property type="molecule type" value="Genomic_DNA"/>
</dbReference>
<dbReference type="RefSeq" id="NP_671658.1">
    <property type="nucleotide sequence ID" value="NC_004105.1"/>
</dbReference>
<dbReference type="PDB" id="3NVN">
    <property type="method" value="X-ray"/>
    <property type="resolution" value="2.26 A"/>
    <property type="chains" value="A=15-399"/>
</dbReference>
<dbReference type="PDB" id="6VXK">
    <property type="method" value="EM"/>
    <property type="resolution" value="3.10 A"/>
    <property type="chains" value="A/C=15-399"/>
</dbReference>
<dbReference type="PDBsum" id="3NVN"/>
<dbReference type="PDBsum" id="6VXK"/>
<dbReference type="EMDB" id="EMD-21442"/>
<dbReference type="SMR" id="Q8JL80"/>
<dbReference type="IntAct" id="Q8JL80">
    <property type="interactions" value="1"/>
</dbReference>
<dbReference type="GeneID" id="951586"/>
<dbReference type="KEGG" id="vg:951586"/>
<dbReference type="EvolutionaryTrace" id="Q8JL80"/>
<dbReference type="Proteomes" id="UP000172110">
    <property type="component" value="Segment"/>
</dbReference>
<dbReference type="GO" id="GO:0005576">
    <property type="term" value="C:extracellular region"/>
    <property type="evidence" value="ECO:0007669"/>
    <property type="project" value="UniProtKB-SubCell"/>
</dbReference>
<dbReference type="GO" id="GO:0005886">
    <property type="term" value="C:plasma membrane"/>
    <property type="evidence" value="ECO:0007669"/>
    <property type="project" value="TreeGrafter"/>
</dbReference>
<dbReference type="GO" id="GO:0045499">
    <property type="term" value="F:chemorepellent activity"/>
    <property type="evidence" value="ECO:0007669"/>
    <property type="project" value="TreeGrafter"/>
</dbReference>
<dbReference type="GO" id="GO:0005178">
    <property type="term" value="F:integrin binding"/>
    <property type="evidence" value="ECO:0007669"/>
    <property type="project" value="TreeGrafter"/>
</dbReference>
<dbReference type="GO" id="GO:0030215">
    <property type="term" value="F:semaphorin receptor binding"/>
    <property type="evidence" value="ECO:0007669"/>
    <property type="project" value="InterPro"/>
</dbReference>
<dbReference type="GO" id="GO:0007229">
    <property type="term" value="P:integrin-mediated signaling pathway"/>
    <property type="evidence" value="ECO:0007669"/>
    <property type="project" value="TreeGrafter"/>
</dbReference>
<dbReference type="GO" id="GO:0030335">
    <property type="term" value="P:positive regulation of cell migration"/>
    <property type="evidence" value="ECO:0007669"/>
    <property type="project" value="TreeGrafter"/>
</dbReference>
<dbReference type="GO" id="GO:0050727">
    <property type="term" value="P:regulation of inflammatory response"/>
    <property type="evidence" value="ECO:0007669"/>
    <property type="project" value="TreeGrafter"/>
</dbReference>
<dbReference type="GO" id="GO:0071526">
    <property type="term" value="P:semaphorin-plexin signaling pathway"/>
    <property type="evidence" value="ECO:0007669"/>
    <property type="project" value="TreeGrafter"/>
</dbReference>
<dbReference type="Gene3D" id="2.130.10.10">
    <property type="entry name" value="YVTN repeat-like/Quinoprotein amine dehydrogenase"/>
    <property type="match status" value="1"/>
</dbReference>
<dbReference type="InterPro" id="IPR001627">
    <property type="entry name" value="Semap_dom"/>
</dbReference>
<dbReference type="InterPro" id="IPR036352">
    <property type="entry name" value="Semap_dom_sf"/>
</dbReference>
<dbReference type="InterPro" id="IPR027231">
    <property type="entry name" value="Semaphorin"/>
</dbReference>
<dbReference type="InterPro" id="IPR015943">
    <property type="entry name" value="WD40/YVTN_repeat-like_dom_sf"/>
</dbReference>
<dbReference type="PANTHER" id="PTHR11036">
    <property type="entry name" value="SEMAPHORIN"/>
    <property type="match status" value="1"/>
</dbReference>
<dbReference type="PANTHER" id="PTHR11036:SF80">
    <property type="entry name" value="SEMAPHORIN-7A"/>
    <property type="match status" value="1"/>
</dbReference>
<dbReference type="Pfam" id="PF01403">
    <property type="entry name" value="Sema"/>
    <property type="match status" value="1"/>
</dbReference>
<dbReference type="SMART" id="SM00630">
    <property type="entry name" value="Sema"/>
    <property type="match status" value="1"/>
</dbReference>
<dbReference type="SUPFAM" id="SSF101912">
    <property type="entry name" value="Sema domain"/>
    <property type="match status" value="1"/>
</dbReference>
<dbReference type="PROSITE" id="PS51004">
    <property type="entry name" value="SEMA"/>
    <property type="match status" value="1"/>
</dbReference>
<gene>
    <name type="primary">EVM139</name>
    <name type="synonym">SEMA</name>
</gene>
<proteinExistence type="evidence at protein level"/>
<sequence>MIPLLFILFYFTNCIEWHKFETSEEIISTYLIDDVLYTGVNGAVYTFSNNELNKTGLTNNNNYITTSIKVEDTLVCGTNNGNPKCWKIDGSEDPKYRGRGYAPYQNSKVTIISHNECVLSDINISKEGIKRWRRFDGPCGYDLYTADNVIPKDGVRGAFVDKDGTYDKVYILFTDTIDTKRIVKIPYIAQMCLNDEGGPSSLSSHRWSTFLKVELECDIDGRSYRQIIHSKAIKTDNDTILYVFFDSPYSKSALCTYSMNAIKHSFSTSKLGGYTKQLPSPAPGICLPAGKVVPHTTFDIIEQYNELDDIIKPLSQPIFEGPSGVKWFDIKEKENEHREYRIYFIKENTIYSFDTKSKQTRSAQVDARLFSVMVTSKPLFIADIGIGVGIPRMKKILKM</sequence>
<name>SEMA_ECTVM</name>
<keyword id="KW-0002">3D-structure</keyword>
<keyword id="KW-0964">Secreted</keyword>
<keyword id="KW-0732">Signal</keyword>
<evidence type="ECO:0000250" key="1"/>
<evidence type="ECO:0000255" key="2"/>
<evidence type="ECO:0000255" key="3">
    <source>
        <dbReference type="PROSITE-ProRule" id="PRU00352"/>
    </source>
</evidence>
<evidence type="ECO:0000269" key="4">
    <source>
    </source>
</evidence>
<evidence type="ECO:0000269" key="5">
    <source>
    </source>
</evidence>
<evidence type="ECO:0000269" key="6">
    <source>
    </source>
</evidence>
<evidence type="ECO:0000305" key="7"/>
<evidence type="ECO:0007829" key="8">
    <source>
        <dbReference type="PDB" id="3NVN"/>
    </source>
</evidence>
<evidence type="ECO:0007829" key="9">
    <source>
        <dbReference type="PDB" id="6VXK"/>
    </source>
</evidence>
<organism>
    <name type="scientific">Ectromelia virus (strain Moscow)</name>
    <name type="common">ECTV</name>
    <name type="synonym">Mousepox virus</name>
    <dbReference type="NCBI Taxonomy" id="265874"/>
    <lineage>
        <taxon>Viruses</taxon>
        <taxon>Varidnaviria</taxon>
        <taxon>Bamfordvirae</taxon>
        <taxon>Nucleocytoviricota</taxon>
        <taxon>Pokkesviricetes</taxon>
        <taxon>Chitovirales</taxon>
        <taxon>Poxviridae</taxon>
        <taxon>Chordopoxvirinae</taxon>
        <taxon>Orthopoxvirus</taxon>
        <taxon>Ectromelia virus</taxon>
    </lineage>
</organism>
<comment type="function">
    <text evidence="4 5">Acts as a semaphorin-like protein and binds to host plexin C1 receptor. May alter the movement of plexin C1-expressing cells including dendritic cells, monocytes, or granulocytes in the proximity of infected cells. May also regulate host cell cytoskeleton of neighboring cells to improve viral infection.</text>
</comment>
<comment type="subunit">
    <text evidence="6">Interacts with host VESPR.</text>
</comment>
<comment type="interaction">
    <interactant intactId="EBI-2927425">
        <id>Q8JL80</id>
    </interactant>
    <interactant intactId="EBI-2927384">
        <id>O60486</id>
        <label>PLXNC1</label>
    </interactant>
    <organismsDiffer>true</organismsDiffer>
    <experiments>3</experiments>
</comment>
<comment type="subcellular location">
    <subcellularLocation>
        <location evidence="1">Secreted</location>
    </subcellularLocation>
</comment>
<comment type="similarity">
    <text evidence="7">Belongs to the semaphorin family.</text>
</comment>
<reference key="1">
    <citation type="journal article" date="1995" name="Virology">
        <title>Species specificity of ectromelia virus and vaccinia virus interferon-gamma binding proteins.</title>
        <authorList>
            <person name="Mossman K."/>
            <person name="Upton C."/>
            <person name="Buller R.M."/>
            <person name="McFadden G."/>
        </authorList>
    </citation>
    <scope>NUCLEOTIDE SEQUENCE [GENOMIC DNA]</scope>
</reference>
<reference key="2">
    <citation type="journal article" date="2000" name="Virus Res.">
        <title>Analysis of host response modifier ORFs of ectromelia virus, the causative agent of mousepox.</title>
        <authorList>
            <person name="Chen N."/>
            <person name="Buller R.M."/>
            <person name="Wall E.M."/>
            <person name="Upton C."/>
        </authorList>
    </citation>
    <scope>NUCLEOTIDE SEQUENCE [GENOMIC DNA]</scope>
</reference>
<reference key="3">
    <citation type="journal article" date="1997" name="Virus Res.">
        <title>A novel poxvirus gene and its human homolog are similar to an E. coli lysophospholipase.</title>
        <authorList>
            <person name="Wall E.M."/>
            <person name="Cao J.X."/>
            <person name="Chen N."/>
            <person name="Buller R.M.L."/>
            <person name="Upton C."/>
        </authorList>
    </citation>
    <scope>NUCLEOTIDE SEQUENCE [GENOMIC DNA]</scope>
</reference>
<reference key="4">
    <citation type="submission" date="2002-06" db="EMBL/GenBank/DDBJ databases">
        <title>The genomic sequence of ectromelia virus, the causative agent of mousepox.</title>
        <authorList>
            <person name="Chen N."/>
            <person name="Danila M.I."/>
            <person name="Feng Z."/>
            <person name="Buller M.L."/>
            <person name="Wang C."/>
            <person name="Han X."/>
            <person name="Lefkowitz E."/>
            <person name="Upton C."/>
        </authorList>
    </citation>
    <scope>NUCLEOTIDE SEQUENCE [LARGE SCALE GENOMIC DNA]</scope>
</reference>
<reference key="5">
    <citation type="journal article" date="2003" name="J. Virol.">
        <title>Genetic variability of immunomodulatory genes in ectromelia virus isolates detected by denaturing high-performance liquid chromatography.</title>
        <authorList>
            <person name="Ribas G."/>
            <person name="Rivera J."/>
            <person name="Saraiva M."/>
            <person name="Campbell R.D."/>
            <person name="Alcami A."/>
        </authorList>
    </citation>
    <scope>NUCLEOTIDE SEQUENCE [LARGE SCALE GENOMIC DNA]</scope>
</reference>
<reference key="6">
    <citation type="journal article" date="1998" name="Immunity">
        <title>A poxvirus-encoded semaphorin induces cytokine production from monocytes and binds to a novel cellular semaphorin receptor, VESPR.</title>
        <authorList>
            <person name="Comeau M.R."/>
            <person name="Johnson R."/>
            <person name="DuBose R.F."/>
            <person name="Petersen M."/>
            <person name="Gearing P."/>
            <person name="VandenBos T."/>
            <person name="Park L."/>
            <person name="Farrah T."/>
            <person name="Buller R.M."/>
            <person name="Cohen J.I."/>
            <person name="Strockbine L.D."/>
            <person name="Rauch C."/>
            <person name="Spriggs M.K."/>
        </authorList>
    </citation>
    <scope>INTERACTION WITH HOST VESPR</scope>
</reference>
<reference key="7">
    <citation type="journal article" date="2005" name="J. Immunol.">
        <title>Plexin C1 engagement on mouse dendritic cells by viral semaphorin A39R induces actin cytoskeleton rearrangement and inhibits integrin-mediated adhesion and chemokine-induced migration.</title>
        <authorList>
            <person name="Walzer T."/>
            <person name="Galibert L."/>
            <person name="Comeau M.R."/>
            <person name="De Smedt T."/>
        </authorList>
    </citation>
    <scope>FUNCTION</scope>
</reference>
<reference key="8">
    <citation type="journal article" date="2005" name="Eur. J. Immunol.">
        <title>Poxvirus semaphorin A39R inhibits phagocytosis by dendritic cells and neutrophils.</title>
        <authorList>
            <person name="Walzer T."/>
            <person name="Galibert L."/>
            <person name="De Smedt T."/>
        </authorList>
    </citation>
    <scope>FUNCTION</scope>
</reference>
<reference key="9">
    <citation type="journal article" date="2010" name="Cell">
        <title>Structural basis of semaphorin-plexin recognition and viral mimicry from Sema7A and A39R complexes with PlexinC1.</title>
        <authorList>
            <person name="Liu H."/>
            <person name="Juo Z.S."/>
            <person name="Shim A.H."/>
            <person name="Focia P.J."/>
            <person name="Chen X."/>
            <person name="Garcia K.C."/>
            <person name="He X."/>
        </authorList>
    </citation>
    <scope>X-RAY CRYSTALLOGRAPHY (2.26 ANGSTROMS) OF 15-399</scope>
</reference>
<accession>Q8JL80</accession>
<protein>
    <recommendedName>
        <fullName>Semaphorin-like protein 139</fullName>
    </recommendedName>
</protein>
<feature type="signal peptide" evidence="2">
    <location>
        <begin position="1"/>
        <end position="14"/>
    </location>
</feature>
<feature type="chain" id="PRO_0000412614" description="Semaphorin-like protein 139">
    <location>
        <begin position="15"/>
        <end position="399"/>
    </location>
</feature>
<feature type="domain" description="Sema" evidence="3">
    <location>
        <begin position="15"/>
        <end position="399"/>
    </location>
</feature>
<feature type="strand" evidence="8">
    <location>
        <begin position="16"/>
        <end position="19"/>
    </location>
</feature>
<feature type="strand" evidence="8">
    <location>
        <begin position="26"/>
        <end position="34"/>
    </location>
</feature>
<feature type="strand" evidence="8">
    <location>
        <begin position="36"/>
        <end position="48"/>
    </location>
</feature>
<feature type="strand" evidence="8">
    <location>
        <begin position="51"/>
        <end position="56"/>
    </location>
</feature>
<feature type="strand" evidence="8">
    <location>
        <begin position="63"/>
        <end position="77"/>
    </location>
</feature>
<feature type="turn" evidence="8">
    <location>
        <begin position="79"/>
        <end position="81"/>
    </location>
</feature>
<feature type="strand" evidence="8">
    <location>
        <begin position="84"/>
        <end position="87"/>
    </location>
</feature>
<feature type="turn" evidence="8">
    <location>
        <begin position="99"/>
        <end position="101"/>
    </location>
</feature>
<feature type="strand" evidence="8">
    <location>
        <begin position="104"/>
        <end position="106"/>
    </location>
</feature>
<feature type="strand" evidence="8">
    <location>
        <begin position="111"/>
        <end position="116"/>
    </location>
</feature>
<feature type="strand" evidence="8">
    <location>
        <begin position="118"/>
        <end position="120"/>
    </location>
</feature>
<feature type="strand" evidence="8">
    <location>
        <begin position="124"/>
        <end position="127"/>
    </location>
</feature>
<feature type="strand" evidence="8">
    <location>
        <begin position="157"/>
        <end position="163"/>
    </location>
</feature>
<feature type="strand" evidence="8">
    <location>
        <begin position="166"/>
        <end position="192"/>
    </location>
</feature>
<feature type="strand" evidence="8">
    <location>
        <begin position="199"/>
        <end position="201"/>
    </location>
</feature>
<feature type="turn" evidence="8">
    <location>
        <begin position="202"/>
        <end position="205"/>
    </location>
</feature>
<feature type="strand" evidence="8">
    <location>
        <begin position="211"/>
        <end position="215"/>
    </location>
</feature>
<feature type="strand" evidence="8">
    <location>
        <begin position="218"/>
        <end position="221"/>
    </location>
</feature>
<feature type="strand" evidence="8">
    <location>
        <begin position="226"/>
        <end position="234"/>
    </location>
</feature>
<feature type="strand" evidence="8">
    <location>
        <begin position="239"/>
        <end position="246"/>
    </location>
</feature>
<feature type="strand" evidence="8">
    <location>
        <begin position="248"/>
        <end position="250"/>
    </location>
</feature>
<feature type="strand" evidence="8">
    <location>
        <begin position="253"/>
        <end position="258"/>
    </location>
</feature>
<feature type="helix" evidence="8">
    <location>
        <begin position="259"/>
        <end position="268"/>
    </location>
</feature>
<feature type="helix" evidence="8">
    <location>
        <begin position="295"/>
        <end position="303"/>
    </location>
</feature>
<feature type="strand" evidence="8">
    <location>
        <begin position="306"/>
        <end position="311"/>
    </location>
</feature>
<feature type="strand" evidence="8">
    <location>
        <begin position="315"/>
        <end position="317"/>
    </location>
</feature>
<feature type="strand" evidence="9">
    <location>
        <begin position="319"/>
        <end position="321"/>
    </location>
</feature>
<feature type="strand" evidence="8">
    <location>
        <begin position="327"/>
        <end position="332"/>
    </location>
</feature>
<feature type="turn" evidence="8">
    <location>
        <begin position="334"/>
        <end position="336"/>
    </location>
</feature>
<feature type="strand" evidence="8">
    <location>
        <begin position="340"/>
        <end position="345"/>
    </location>
</feature>
<feature type="strand" evidence="8">
    <location>
        <begin position="347"/>
        <end position="354"/>
    </location>
</feature>
<feature type="turn" evidence="8">
    <location>
        <begin position="355"/>
        <end position="357"/>
    </location>
</feature>
<feature type="strand" evidence="8">
    <location>
        <begin position="360"/>
        <end position="364"/>
    </location>
</feature>
<feature type="strand" evidence="8">
    <location>
        <begin position="369"/>
        <end position="389"/>
    </location>
</feature>
<organismHost>
    <name type="scientific">Mus musculus</name>
    <name type="common">Mouse</name>
    <dbReference type="NCBI Taxonomy" id="10090"/>
</organismHost>